<name>POLS_ONNVS</name>
<organism>
    <name type="scientific">O'nyong-nyong virus (strain SG650)</name>
    <name type="common">ONNV</name>
    <dbReference type="NCBI Taxonomy" id="374989"/>
    <lineage>
        <taxon>Viruses</taxon>
        <taxon>Riboviria</taxon>
        <taxon>Orthornavirae</taxon>
        <taxon>Kitrinoviricota</taxon>
        <taxon>Alsuviricetes</taxon>
        <taxon>Martellivirales</taxon>
        <taxon>Togaviridae</taxon>
        <taxon>Alphavirus</taxon>
        <taxon>Onyong-nyong virus</taxon>
    </lineage>
</organism>
<organismHost>
    <name type="scientific">Anopheles</name>
    <dbReference type="NCBI Taxonomy" id="44482"/>
</organismHost>
<organismHost>
    <name type="scientific">Homo sapiens</name>
    <name type="common">Human</name>
    <dbReference type="NCBI Taxonomy" id="9606"/>
</organismHost>
<evidence type="ECO:0000250" key="1"/>
<evidence type="ECO:0000250" key="2">
    <source>
        <dbReference type="UniProtKB" id="P03315"/>
    </source>
</evidence>
<evidence type="ECO:0000250" key="3">
    <source>
        <dbReference type="UniProtKB" id="P03316"/>
    </source>
</evidence>
<evidence type="ECO:0000250" key="4">
    <source>
        <dbReference type="UniProtKB" id="Q5WQY5"/>
    </source>
</evidence>
<evidence type="ECO:0000250" key="5">
    <source>
        <dbReference type="UniProtKB" id="Q5XXP3"/>
    </source>
</evidence>
<evidence type="ECO:0000250" key="6">
    <source>
        <dbReference type="UniProtKB" id="Q5Y388"/>
    </source>
</evidence>
<evidence type="ECO:0000250" key="7">
    <source>
        <dbReference type="UniProtKB" id="Q86925"/>
    </source>
</evidence>
<evidence type="ECO:0000250" key="8">
    <source>
        <dbReference type="UniProtKB" id="Q8JUX5"/>
    </source>
</evidence>
<evidence type="ECO:0000255" key="9"/>
<evidence type="ECO:0000255" key="10">
    <source>
        <dbReference type="PROSITE-ProRule" id="PRU01027"/>
    </source>
</evidence>
<evidence type="ECO:0000256" key="11">
    <source>
        <dbReference type="SAM" id="MobiDB-lite"/>
    </source>
</evidence>
<evidence type="ECO:0000305" key="12"/>
<sequence>MEFIPAQTYYNRRYQPRPWTQRPTIQVIRPKPRRSRPAGQLAQLISAVSRLALRTVPQKPRRTRKTKKQKQVKQEQQSTRNQKKKAPKQKQTQKKKRPGRRERMCMKIENDCIFEVKHEGKITGYACLVGDKVMKPAHVKGTIDNADLAKLAFKRSSKYDLECAQIPVHMKSDASKFTHEKPEGYYNWHHGAVQYSGGRFTIPTGAGKPGDSGRPIFDNKGRVVAIVLGGANEGTRTALSVVTWNKDIVTKITPEGSVEWSLALPVMCLLANTTFPCSQPPCAPCCYEKKPEETLRMLEDNVMQPGYYQLLDSALACSQHRQRRNARENFNVYKVTRPYLAHCPDCGEGHSCHSPIALERIRSEATDGTLKIQVSLQIGIKTDDSHDWTKLRYMDSHTPVDADRSGLFVRTSAPCTITGTMGHFILARCPKGETLTVGFVDSRRISHTCMHPFHHEPPLIGREKFHSRPQHGKELPCSTYVHTTAATTEEIEVHMPPDTPDYTLMTQQAGNVKITVDGQTVRYKCKCDGSNEGLITTDKVINNCKVDQCHTAVTNHKKWQYNSPLTPRNSEQGDRKGKIHIPFPLVNTTCRVPKARNPTITYGKNRVTLLLYPDHPTLLSYRSMGRIPDYHEEWITSKKEISITVPAEGLEVTWGNNDPYKYWPQLSTNGTAHGHPHEIILYYYELYPTTTIAVLAAASIVVASLVSLSLGMCICARRRCITPYELTPGATIPFLLGVLCCVKTAKAASYYEAATYLWNEQQPLFWLQLLIPLSAAIVACNCLKLLPCCCKTLTFLAVMSIGARTVSAYEHATVIPNTVGVPYKTLVSRPGYSPMVLEMELQSVTLEPTLFLDYITCEYKTITPSPYVKCCGTAECKAKNLPDYNCKVFTGVYPFMWGGAYCFCDAENTQLSEAHVEKSESCKTEFASAYRAHTASVSAKLRVFYQGNNITVSAYANGDHAVTVKDAKFVIGPLSSAWSPFDNKIVVYKGEVYNMDYPPFGAGRPGQFGDIQSRTPDSKDVYANTQLILQRPAAGAIHVPYSQAPSGFKYWLKEKGASLQHTAPFGCQIATNPVRAVNCAVGNIPVSIDIPDAAFTRVTDAPSVTDMSCEVASCTHSSDFGGAAVVKYTASKKGKCAVHSLTNAVTIREPNVDVEGTAQLQIAFSTALASAEFKVQICSTQVHCSATCHPPKDHIVNYPSPHTTLGVQDISTTAMSWVQKITGGVGLVVAIAALILIIVLCVSFSRH</sequence>
<protein>
    <recommendedName>
        <fullName>Structural polyprotein</fullName>
    </recommendedName>
    <alternativeName>
        <fullName>p130</fullName>
    </alternativeName>
    <component>
        <recommendedName>
            <fullName>Capsid protein</fullName>
            <ecNumber>3.4.21.90</ecNumber>
        </recommendedName>
        <alternativeName>
            <fullName>Coat protein</fullName>
            <shortName>C</shortName>
        </alternativeName>
    </component>
    <component>
        <recommendedName>
            <fullName>Precursor of protein E3/E2</fullName>
        </recommendedName>
        <alternativeName>
            <fullName>p62</fullName>
        </alternativeName>
        <alternativeName>
            <fullName>pE2</fullName>
        </alternativeName>
    </component>
    <component>
        <recommendedName>
            <fullName>Assembly protein E3</fullName>
        </recommendedName>
    </component>
    <component>
        <recommendedName>
            <fullName>Spike glycoprotein E2</fullName>
        </recommendedName>
        <alternativeName>
            <fullName>E2 envelope glycoprotein</fullName>
        </alternativeName>
    </component>
    <component>
        <recommendedName>
            <fullName>6K protein</fullName>
        </recommendedName>
    </component>
    <component>
        <recommendedName>
            <fullName>Spike glycoprotein E1</fullName>
        </recommendedName>
        <alternativeName>
            <fullName>E1 envelope glycoprotein</fullName>
        </alternativeName>
    </component>
</protein>
<reference key="1">
    <citation type="journal article" date="1998" name="Virology">
        <title>Emergence of epidemic O'nyong-nyong fever in Uganda after a 35-year absence: genetic characterization of the virus.</title>
        <authorList>
            <person name="Lanciotti R.S."/>
            <person name="Ludwig M.L."/>
            <person name="Rwaguma E.B."/>
            <person name="Lutwama J.J."/>
            <person name="Kram T.M."/>
            <person name="Karabatsos N."/>
            <person name="Cropp B.C."/>
            <person name="Miller B.R."/>
        </authorList>
    </citation>
    <scope>NUCLEOTIDE SEQUENCE [GENOMIC RNA]</scope>
</reference>
<dbReference type="EC" id="3.4.21.90"/>
<dbReference type="EMBL" id="AF079456">
    <property type="protein sequence ID" value="AAC97205.1"/>
    <property type="molecule type" value="Genomic_RNA"/>
</dbReference>
<dbReference type="BMRB" id="O90369"/>
<dbReference type="SMR" id="O90369"/>
<dbReference type="MEROPS" id="S03.001"/>
<dbReference type="Proteomes" id="UP000007787">
    <property type="component" value="Segment"/>
</dbReference>
<dbReference type="GO" id="GO:0030430">
    <property type="term" value="C:host cell cytoplasm"/>
    <property type="evidence" value="ECO:0007669"/>
    <property type="project" value="UniProtKB-SubCell"/>
</dbReference>
<dbReference type="GO" id="GO:0020002">
    <property type="term" value="C:host cell plasma membrane"/>
    <property type="evidence" value="ECO:0007669"/>
    <property type="project" value="UniProtKB-SubCell"/>
</dbReference>
<dbReference type="GO" id="GO:0016020">
    <property type="term" value="C:membrane"/>
    <property type="evidence" value="ECO:0007669"/>
    <property type="project" value="UniProtKB-KW"/>
</dbReference>
<dbReference type="GO" id="GO:0039619">
    <property type="term" value="C:T=4 icosahedral viral capsid"/>
    <property type="evidence" value="ECO:0007669"/>
    <property type="project" value="UniProtKB-KW"/>
</dbReference>
<dbReference type="GO" id="GO:0055036">
    <property type="term" value="C:virion membrane"/>
    <property type="evidence" value="ECO:0007669"/>
    <property type="project" value="UniProtKB-SubCell"/>
</dbReference>
<dbReference type="GO" id="GO:0004252">
    <property type="term" value="F:serine-type endopeptidase activity"/>
    <property type="evidence" value="ECO:0007669"/>
    <property type="project" value="InterPro"/>
</dbReference>
<dbReference type="GO" id="GO:0005198">
    <property type="term" value="F:structural molecule activity"/>
    <property type="evidence" value="ECO:0007669"/>
    <property type="project" value="InterPro"/>
</dbReference>
<dbReference type="GO" id="GO:0039654">
    <property type="term" value="P:fusion of virus membrane with host endosome membrane"/>
    <property type="evidence" value="ECO:0007669"/>
    <property type="project" value="UniProtKB-KW"/>
</dbReference>
<dbReference type="GO" id="GO:0006508">
    <property type="term" value="P:proteolysis"/>
    <property type="evidence" value="ECO:0007669"/>
    <property type="project" value="UniProtKB-KW"/>
</dbReference>
<dbReference type="GO" id="GO:0046718">
    <property type="term" value="P:symbiont entry into host cell"/>
    <property type="evidence" value="ECO:0007669"/>
    <property type="project" value="UniProtKB-KW"/>
</dbReference>
<dbReference type="GO" id="GO:0039722">
    <property type="term" value="P:symbiont-mediated suppression of host toll-like receptor signaling pathway"/>
    <property type="evidence" value="ECO:0000250"/>
    <property type="project" value="UniProtKB"/>
</dbReference>
<dbReference type="GO" id="GO:0019062">
    <property type="term" value="P:virion attachment to host cell"/>
    <property type="evidence" value="ECO:0007669"/>
    <property type="project" value="UniProtKB-KW"/>
</dbReference>
<dbReference type="FunFam" id="1.10.287.2230:FF:000001">
    <property type="entry name" value="Structural polyprotein"/>
    <property type="match status" value="1"/>
</dbReference>
<dbReference type="FunFam" id="2.40.10.10:FF:000076">
    <property type="entry name" value="Structural polyprotein"/>
    <property type="match status" value="1"/>
</dbReference>
<dbReference type="FunFam" id="2.60.40.350:FF:000002">
    <property type="entry name" value="Structural polyprotein"/>
    <property type="match status" value="1"/>
</dbReference>
<dbReference type="FunFam" id="2.60.98.10:FF:000002">
    <property type="entry name" value="Structural polyprotein"/>
    <property type="match status" value="1"/>
</dbReference>
<dbReference type="FunFam" id="2.60.98.10:FF:000003">
    <property type="entry name" value="Structural polyprotein"/>
    <property type="match status" value="1"/>
</dbReference>
<dbReference type="FunFam" id="2.60.98.10:FF:000004">
    <property type="entry name" value="Structural polyprotein"/>
    <property type="match status" value="1"/>
</dbReference>
<dbReference type="Gene3D" id="1.10.287.2230">
    <property type="match status" value="1"/>
</dbReference>
<dbReference type="Gene3D" id="2.60.40.350">
    <property type="match status" value="1"/>
</dbReference>
<dbReference type="Gene3D" id="2.60.40.3200">
    <property type="entry name" value="Alphavirus E2 glycoprotein, A domain"/>
    <property type="match status" value="1"/>
</dbReference>
<dbReference type="Gene3D" id="2.60.40.4310">
    <property type="entry name" value="Alphavirus E2 glycoprotein, domain B"/>
    <property type="match status" value="1"/>
</dbReference>
<dbReference type="Gene3D" id="2.60.40.2400">
    <property type="entry name" value="Alphavirus E2 glycoprotein, domain C"/>
    <property type="match status" value="1"/>
</dbReference>
<dbReference type="Gene3D" id="2.60.98.10">
    <property type="entry name" value="Tick-borne Encephalitis virus Glycoprotein, domain 1"/>
    <property type="match status" value="3"/>
</dbReference>
<dbReference type="Gene3D" id="2.40.10.10">
    <property type="entry name" value="Trypsin-like serine proteases"/>
    <property type="match status" value="2"/>
</dbReference>
<dbReference type="InterPro" id="IPR002548">
    <property type="entry name" value="Alpha_E1_glycop"/>
</dbReference>
<dbReference type="InterPro" id="IPR000936">
    <property type="entry name" value="Alpha_E2_glycop"/>
</dbReference>
<dbReference type="InterPro" id="IPR002533">
    <property type="entry name" value="Alpha_E3_glycop"/>
</dbReference>
<dbReference type="InterPro" id="IPR042304">
    <property type="entry name" value="Alphavir_E2_A"/>
</dbReference>
<dbReference type="InterPro" id="IPR042305">
    <property type="entry name" value="Alphavir_E2_B"/>
</dbReference>
<dbReference type="InterPro" id="IPR042306">
    <property type="entry name" value="Alphavir_E2_C"/>
</dbReference>
<dbReference type="InterPro" id="IPR000336">
    <property type="entry name" value="Flavivir/Alphavir_Ig-like_sf"/>
</dbReference>
<dbReference type="InterPro" id="IPR036253">
    <property type="entry name" value="Glycoprot_cen/dimer_sf"/>
</dbReference>
<dbReference type="InterPro" id="IPR038055">
    <property type="entry name" value="Glycoprot_E_dimer_dom"/>
</dbReference>
<dbReference type="InterPro" id="IPR014756">
    <property type="entry name" value="Ig_E-set"/>
</dbReference>
<dbReference type="InterPro" id="IPR009003">
    <property type="entry name" value="Peptidase_S1_PA"/>
</dbReference>
<dbReference type="InterPro" id="IPR043504">
    <property type="entry name" value="Peptidase_S1_PA_chymotrypsin"/>
</dbReference>
<dbReference type="InterPro" id="IPR000930">
    <property type="entry name" value="Peptidase_S3"/>
</dbReference>
<dbReference type="Pfam" id="PF01589">
    <property type="entry name" value="Alpha_E1_glycop"/>
    <property type="match status" value="1"/>
</dbReference>
<dbReference type="Pfam" id="PF00943">
    <property type="entry name" value="Alpha_E2_glycop"/>
    <property type="match status" value="1"/>
</dbReference>
<dbReference type="Pfam" id="PF01563">
    <property type="entry name" value="Alpha_E3_glycop"/>
    <property type="match status" value="1"/>
</dbReference>
<dbReference type="Pfam" id="PF00944">
    <property type="entry name" value="Peptidase_S3"/>
    <property type="match status" value="1"/>
</dbReference>
<dbReference type="PRINTS" id="PR00798">
    <property type="entry name" value="TOGAVIRIN"/>
</dbReference>
<dbReference type="SUPFAM" id="SSF81296">
    <property type="entry name" value="E set domains"/>
    <property type="match status" value="1"/>
</dbReference>
<dbReference type="SUPFAM" id="SSF50494">
    <property type="entry name" value="Trypsin-like serine proteases"/>
    <property type="match status" value="1"/>
</dbReference>
<dbReference type="SUPFAM" id="SSF56983">
    <property type="entry name" value="Viral glycoprotein, central and dimerisation domains"/>
    <property type="match status" value="1"/>
</dbReference>
<dbReference type="PROSITE" id="PS51690">
    <property type="entry name" value="ALPHAVIRUS_CP"/>
    <property type="match status" value="1"/>
</dbReference>
<keyword id="KW-0167">Capsid protein</keyword>
<keyword id="KW-0165">Cleavage on pair of basic residues</keyword>
<keyword id="KW-1015">Disulfide bond</keyword>
<keyword id="KW-1170">Fusion of virus membrane with host endosomal membrane</keyword>
<keyword id="KW-1168">Fusion of virus membrane with host membrane</keyword>
<keyword id="KW-0325">Glycoprotein</keyword>
<keyword id="KW-1032">Host cell membrane</keyword>
<keyword id="KW-1035">Host cytoplasm</keyword>
<keyword id="KW-1038">Host endoplasmic reticulum</keyword>
<keyword id="KW-1040">Host Golgi apparatus</keyword>
<keyword id="KW-1043">Host membrane</keyword>
<keyword id="KW-0945">Host-virus interaction</keyword>
<keyword id="KW-0378">Hydrolase</keyword>
<keyword id="KW-0407">Ion channel</keyword>
<keyword id="KW-0406">Ion transport</keyword>
<keyword id="KW-0449">Lipoprotein</keyword>
<keyword id="KW-0472">Membrane</keyword>
<keyword id="KW-0564">Palmitate</keyword>
<keyword id="KW-0645">Protease</keyword>
<keyword id="KW-0720">Serine protease</keyword>
<keyword id="KW-1144">T=4 icosahedral capsid protein</keyword>
<keyword id="KW-0812">Transmembrane</keyword>
<keyword id="KW-1133">Transmembrane helix</keyword>
<keyword id="KW-0813">Transport</keyword>
<keyword id="KW-1161">Viral attachment to host cell</keyword>
<keyword id="KW-1234">Viral attachment to host entry receptor</keyword>
<keyword id="KW-1182">Viral ion channel</keyword>
<keyword id="KW-1162">Viral penetration into host cytoplasm</keyword>
<keyword id="KW-0946">Virion</keyword>
<keyword id="KW-1160">Virus entry into host cell</keyword>
<proteinExistence type="inferred from homology"/>
<comment type="function">
    <molecule>Capsid protein</molecule>
    <text evidence="2">Possesses a protease activity that results in its autocatalytic cleavage from the nascent structural protein. Following its self-cleavage, the capsid protein transiently associates with ribosomes, and within several minutes the protein binds to viral RNA and rapidly assembles into icosahedric core particles. The resulting nucleocapsid eventually associates with the cytoplasmic domain of the spike glycoprotein E2 at the cell membrane, leading to budding and formation of mature virions. In case of infection, new virions attach to target cells and after clathrin-mediated endocytosis their membrane fuses with the host endosomal membrane. This leads to the release of the nucleocapsid into the cytoplasm, followed by an uncoating event necessary for the genomic RNA to become accessible. The uncoating might be triggered by the interaction of capsid proteins with ribosomes. Binding of ribosomes would release the genomic RNA since the same region is genomic RNA-binding and ribosome-binding.</text>
</comment>
<comment type="function">
    <molecule>Assembly protein E3</molecule>
    <text evidence="2">Provides the signal sequence for the translocation of the precursor of protein E3/E2 to the host endoplasmic reticulum. Mediates pH protection of spike glycoprotein E1 during the transport via the secretory pathway.</text>
</comment>
<comment type="function">
    <molecule>Spike glycoprotein E2</molecule>
    <text evidence="2 4">Plays a role in viral attachment to target host cell, by binding to the cell receptor MXRA8 (By similarity). Synthesized as a p62 precursor which is processed by furin at the cell membrane just before virion budding, giving rise to E2-E1 heterodimer. The p62-E1 heterodimer is stable, whereas E2-E1 is unstable and dissociate at low pH. p62 is processed at the last step, presumably to avoid E1 fusion activation before its final export to cell surface. E2 C-terminus contains a transitory transmembrane that would be disrupted by palmitoylation, resulting in reorientation of the C-terminal tail from lumenal to cytoplasmic side. This step is critical since E2 C-terminus is involved in budding by interacting with capsid proteins. This release of E2 C-terminus in cytoplasm occurs lately in protein export, and precludes premature assembly of particles at the endoplasmic reticulum membrane (By similarity).</text>
</comment>
<comment type="function">
    <molecule>6K protein</molecule>
    <text evidence="2 3">Acts as a viroporin that participates in virus glycoprotein processing and transport to the plasma membrane, cell permeabilization and budding of viral particles (By similarity). Disrupts the calcium homeostasis of the cell, probably at the endoplasmic reticulum level (By similarity). This leads to cytoplasmic calcium elevation (By similarity). Because of its lipophilic properties, the 6K protein is postulated to influence the selection of lipids that interact with the transmembrane domains of the glycoproteins, which, in turn, affects the deformability of the bilayer required for the extreme curvature that occurs as budding proceeds. Present in low amount in virions, about 3% compared to viral glycoproteins (By similarity).</text>
</comment>
<comment type="function">
    <molecule>Spike glycoprotein E1</molecule>
    <text evidence="2">Class II viral fusion protein. Fusion activity is inactive as long as E1 is bound to E2 in mature virion. After virus attachment to target cell via host MXRA8 and endocytosis, acidification of the endosome induce dissociation of E1/E2 heterodimer and concomitant trimerization of the E1 subunits. This E1 trimer is fusion active, and promotes release of viral nucleocapsid in cytoplasm after endosome and viral membrane fusion. Efficient fusion requires the presence of cholesterol and sphingolipid in the target membrane.</text>
</comment>
<comment type="catalytic activity">
    <reaction evidence="3">
        <text>Autocatalytic release of the core protein from the N-terminus of the togavirus structural polyprotein by hydrolysis of a -Trp-|-Ser- bond.</text>
        <dbReference type="EC" id="3.4.21.90"/>
    </reaction>
</comment>
<comment type="subunit">
    <molecule>Capsid protein</molecule>
    <text evidence="3 7 8">Homodimer (By similarity). Homomultimer (By similarity). Interacts with host karyopherin KPNA4; this interaction allows the nuclear import of the viral capsid protein (By similarity). Interacts with spike glycoprotein E2 (By similarity). Interacts with host IRAK1; the interaction leads to inhibition of IRAK1-dependent signaling (By similarity).</text>
</comment>
<comment type="subunit">
    <molecule>Precursor of protein E3/E2</molecule>
    <text evidence="2 3">The precursor of protein E3/E2 and E1 form a heterodimer shortly after synthesis.</text>
</comment>
<comment type="subunit">
    <molecule>Spike glycoprotein E1</molecule>
    <text evidence="3 8">The precursor of protein E3/E2 and E1 form a heterodimer shortly after synthesis (By similarity). Processing of the precursor of protein E3/E2 into E2 and E3 results in a heterodimer of the spike glycoproteins E2 and E1 (By similarity). Spike at virion surface are constituted of three E2-E1 heterodimers (By similarity). After target cell attachment and endocytosis, E1 change conformation to form homotrimers (By similarity). Interacts with 6K protein (By similarity).</text>
</comment>
<comment type="subunit">
    <molecule>Spike glycoprotein E2</molecule>
    <text evidence="3 4">Interacts with spike glycoprotein E1 (By similarity). Processing of the precursor of protein E3/E2 into E2 and E3 results in a heterodimer of the spike glycoproteins E2 and E1 (By similarity). Spike at virion surface are constituted of a trimer of E2-E1 heterodimers (By similarity). Interacts with 6K protein (By similarity). Interacts with host MXRA8; this interaction mediates virus entry (By similarity).</text>
</comment>
<comment type="subunit">
    <molecule>6K protein</molecule>
    <text evidence="3 5">Oligomer (By similarity). Interacts with spike glycoprotein E1. Interacts with spike glycoprotein E2 (By similarity).</text>
</comment>
<comment type="subcellular location">
    <molecule>Capsid protein</molecule>
    <subcellularLocation>
        <location evidence="3">Virion</location>
    </subcellularLocation>
    <subcellularLocation>
        <location evidence="3">Host cytoplasm</location>
    </subcellularLocation>
    <subcellularLocation>
        <location evidence="3">Host cell membrane</location>
    </subcellularLocation>
</comment>
<comment type="subcellular location">
    <molecule>Spike glycoprotein E2</molecule>
    <subcellularLocation>
        <location evidence="8">Virion membrane</location>
        <topology evidence="9">Single-pass type I membrane protein</topology>
    </subcellularLocation>
    <subcellularLocation>
        <location evidence="3">Host cell membrane</location>
        <topology evidence="8">Single-pass type I membrane protein</topology>
    </subcellularLocation>
</comment>
<comment type="subcellular location">
    <molecule>6K protein</molecule>
    <subcellularLocation>
        <location evidence="3">Host cell membrane</location>
        <topology evidence="9">Multi-pass membrane protein</topology>
    </subcellularLocation>
    <subcellularLocation>
        <location evidence="3">Virion membrane</location>
        <topology evidence="9">Multi-pass membrane protein</topology>
    </subcellularLocation>
    <subcellularLocation>
        <location evidence="3">Host Golgi apparatus</location>
    </subcellularLocation>
    <subcellularLocation>
        <location>Host Golgi apparatus</location>
        <location>Host trans-Golgi network</location>
    </subcellularLocation>
    <subcellularLocation>
        <location evidence="3">Host endoplasmic reticulum</location>
    </subcellularLocation>
</comment>
<comment type="subcellular location">
    <molecule>Spike glycoprotein E1</molecule>
    <subcellularLocation>
        <location evidence="8">Virion membrane</location>
        <topology evidence="9">Single-pass type I membrane protein</topology>
    </subcellularLocation>
    <subcellularLocation>
        <location evidence="3 8">Host cell membrane</location>
        <topology evidence="9">Single-pass type I membrane protein</topology>
    </subcellularLocation>
</comment>
<comment type="domain">
    <text evidence="2">Structural polyprotein: As soon as the capsid protein has been autocleaved, an internal uncleaved signal peptide directs the remaining polyprotein to the endoplasmic reticulum.</text>
</comment>
<comment type="PTM">
    <text evidence="2">Structural polyprotein: Specific enzymatic cleavages in vivo yield mature proteins. Capsid protein is auto-cleaved during polyprotein translation, unmasking a signal peptide at the N-terminus of the precursor of E3/E2. The remaining polyprotein is then targeted to the host endoplasmic reticulum, where host signal peptidase cleaves it into pE2, 6K and E1 proteins. pE2 is further processed to mature E3 and E2 by host furin in trans-Golgi vesicle.</text>
</comment>
<comment type="PTM">
    <molecule>Spike glycoprotein E2</molecule>
    <text evidence="2">Palmitoylated via thioester bonds. These palmitoylations may induce disruption of the C-terminus transmembrane. This would result in the reorientation of E2 C-terminus from lumenal to cytoplasmic side.</text>
</comment>
<comment type="PTM">
    <molecule>Spike glycoprotein E1</molecule>
    <text evidence="2">N-glycosylated.</text>
</comment>
<comment type="PTM">
    <molecule>Spike glycoprotein E2</molecule>
    <text evidence="2">N-glycosylated.</text>
</comment>
<comment type="PTM">
    <molecule>Assembly protein E3</molecule>
    <text evidence="2">N-glycosylated.</text>
</comment>
<comment type="PTM">
    <molecule>6K protein</molecule>
    <text evidence="2">Palmitoylated via thioester bonds.</text>
</comment>
<comment type="miscellaneous">
    <text evidence="12">Belongs to the Old World alphaviruses that usually cause fever, maculopapular rash, arthralgia and myalgia.</text>
</comment>
<comment type="miscellaneous">
    <text evidence="7">Structural polyprotein: Translated from a subgenomic RNA synthesized during togavirus replication.</text>
</comment>
<feature type="chain" id="PRO_0000238754" description="Capsid protein" evidence="1">
    <location>
        <begin position="1"/>
        <end position="260"/>
    </location>
</feature>
<feature type="chain" id="PRO_0000238755" description="Precursor of protein E3/E2" evidence="1">
    <location>
        <begin position="261"/>
        <end position="747"/>
    </location>
</feature>
<feature type="chain" id="PRO_0000238756" description="Assembly protein E3" evidence="1">
    <location>
        <begin position="261"/>
        <end position="324"/>
    </location>
</feature>
<feature type="chain" id="PRO_0000238757" description="Spike glycoprotein E2" evidence="1">
    <location>
        <begin position="325"/>
        <end position="747"/>
    </location>
</feature>
<feature type="chain" id="PRO_0000238758" description="6K protein" evidence="1">
    <location>
        <begin position="748"/>
        <end position="808"/>
    </location>
</feature>
<feature type="chain" id="PRO_0000238759" description="Spike glycoprotein E1" evidence="1">
    <location>
        <begin position="809"/>
        <end position="1247"/>
    </location>
</feature>
<feature type="topological domain" description="Extracellular" evidence="9">
    <location>
        <begin position="325"/>
        <end position="691"/>
    </location>
</feature>
<feature type="transmembrane region" description="Helical" evidence="9">
    <location>
        <begin position="692"/>
        <end position="712"/>
    </location>
</feature>
<feature type="topological domain" description="Cytoplasmic" evidence="9">
    <location>
        <begin position="713"/>
        <end position="747"/>
    </location>
</feature>
<feature type="topological domain" description="Extracellular" evidence="9">
    <location>
        <begin position="748"/>
        <end position="762"/>
    </location>
</feature>
<feature type="transmembrane region" description="Helical" evidence="9">
    <location>
        <begin position="763"/>
        <end position="783"/>
    </location>
</feature>
<feature type="topological domain" description="Cytoplasmic" evidence="9">
    <location>
        <begin position="784"/>
        <end position="787"/>
    </location>
</feature>
<feature type="transmembrane region" description="Helical" evidence="9">
    <location>
        <begin position="788"/>
        <end position="808"/>
    </location>
</feature>
<feature type="topological domain" description="Extracellular" evidence="9">
    <location>
        <begin position="809"/>
        <end position="1223"/>
    </location>
</feature>
<feature type="transmembrane region" description="Helical" evidence="9">
    <location>
        <begin position="1224"/>
        <end position="1244"/>
    </location>
</feature>
<feature type="topological domain" description="Cytoplasmic" evidence="9">
    <location>
        <begin position="1245"/>
        <end position="1247"/>
    </location>
</feature>
<feature type="domain" description="Peptidase S3" evidence="10">
    <location>
        <begin position="112"/>
        <end position="260"/>
    </location>
</feature>
<feature type="region of interest" description="Disordered" evidence="11">
    <location>
        <begin position="52"/>
        <end position="103"/>
    </location>
</feature>
<feature type="region of interest" description="Ribosome-binding" evidence="1">
    <location>
        <begin position="86"/>
        <end position="99"/>
    </location>
</feature>
<feature type="region of interest" description="Interaction with spike glycoprotein E2" evidence="3">
    <location>
        <begin position="154"/>
        <end position="159"/>
    </location>
</feature>
<feature type="region of interest" description="Functions as an uncleaved signal peptide for the precursor of protein E3/E2" evidence="2">
    <location>
        <begin position="261"/>
        <end position="273"/>
    </location>
</feature>
<feature type="region of interest" description="Interaction with the capsid protein" evidence="3">
    <location>
        <begin position="715"/>
        <end position="719"/>
    </location>
</feature>
<feature type="region of interest" description="Transient transmembrane before p62-6K protein processing" evidence="9">
    <location>
        <begin position="720"/>
        <end position="740"/>
    </location>
</feature>
<feature type="region of interest" description="E1 fusion peptide loop" evidence="8">
    <location>
        <begin position="892"/>
        <end position="909"/>
    </location>
</feature>
<feature type="compositionally biased region" description="Basic residues" evidence="11">
    <location>
        <begin position="59"/>
        <end position="71"/>
    </location>
</feature>
<feature type="compositionally biased region" description="Basic residues" evidence="11">
    <location>
        <begin position="81"/>
        <end position="100"/>
    </location>
</feature>
<feature type="active site" description="Charge relay system" evidence="10">
    <location>
        <position position="138"/>
    </location>
</feature>
<feature type="active site" description="Charge relay system" evidence="10">
    <location>
        <position position="160"/>
    </location>
</feature>
<feature type="active site" description="Charge relay system" evidence="10">
    <location>
        <position position="212"/>
    </location>
</feature>
<feature type="site" description="Cleavage; by autolysis" evidence="2">
    <location>
        <begin position="260"/>
        <end position="261"/>
    </location>
</feature>
<feature type="site" description="Cleavage; by host furin" evidence="2">
    <location>
        <begin position="324"/>
        <end position="325"/>
    </location>
</feature>
<feature type="site" description="Cleavage; by host signal peptidase" evidence="2">
    <location>
        <begin position="747"/>
        <end position="748"/>
    </location>
</feature>
<feature type="site" description="Cleavage; by host signal peptidase" evidence="2">
    <location>
        <begin position="808"/>
        <end position="809"/>
    </location>
</feature>
<feature type="lipid moiety-binding region" description="S-palmitoyl cysteine; by host" evidence="3">
    <location>
        <position position="720"/>
    </location>
</feature>
<feature type="lipid moiety-binding region" description="S-palmitoyl cysteine; by host" evidence="6">
    <location>
        <position position="740"/>
    </location>
</feature>
<feature type="lipid moiety-binding region" description="S-palmitoyl cysteine; by host" evidence="6">
    <location>
        <position position="741"/>
    </location>
</feature>
<feature type="lipid moiety-binding region" description="S-palmitoyl cysteine; by host" evidence="6">
    <location>
        <position position="1241"/>
    </location>
</feature>
<feature type="glycosylation site" description="N-linked (GlcNAc...) asparagine; by host" evidence="9">
    <location>
        <position position="272"/>
    </location>
</feature>
<feature type="glycosylation site" description="N-linked (GlcNAc...) asparagine; by host" evidence="6">
    <location>
        <position position="587"/>
    </location>
</feature>
<feature type="glycosylation site" description="N-linked (GlcNAc...) asparagine; by host" evidence="6">
    <location>
        <position position="949"/>
    </location>
</feature>
<feature type="glycosylation site" description="N-linked (GlcNAc...) asparagine; by host" evidence="6">
    <location>
        <position position="1078"/>
    </location>
</feature>
<feature type="disulfide bond" evidence="2">
    <location>
        <begin position="112"/>
        <end position="127"/>
    </location>
</feature>
<feature type="disulfide bond" evidence="5">
    <location>
        <begin position="268"/>
        <end position="277"/>
    </location>
</feature>
<feature type="disulfide bond" evidence="5">
    <location>
        <begin position="282"/>
        <end position="286"/>
    </location>
</feature>
<feature type="disulfide bond" evidence="5">
    <location>
        <begin position="285"/>
        <end position="317"/>
    </location>
</feature>
<feature type="disulfide bond" evidence="5">
    <location>
        <begin position="343"/>
        <end position="449"/>
    </location>
</feature>
<feature type="disulfide bond" evidence="5">
    <location>
        <begin position="346"/>
        <end position="352"/>
    </location>
</feature>
<feature type="disulfide bond" evidence="5">
    <location>
        <begin position="415"/>
        <end position="429"/>
    </location>
</feature>
<feature type="disulfide bond" evidence="5">
    <location>
        <begin position="477"/>
        <end position="590"/>
    </location>
</feature>
<feature type="disulfide bond" evidence="5">
    <location>
        <begin position="525"/>
        <end position="549"/>
    </location>
</feature>
<feature type="disulfide bond" evidence="5">
    <location>
        <begin position="527"/>
        <end position="544"/>
    </location>
</feature>
<feature type="disulfide bond" evidence="5">
    <location>
        <begin position="720"/>
        <end position="741"/>
    </location>
</feature>
<feature type="disulfide bond" evidence="5">
    <location>
        <begin position="857"/>
        <end position="922"/>
    </location>
</feature>
<feature type="disulfide bond" evidence="5">
    <location>
        <begin position="870"/>
        <end position="902"/>
    </location>
</feature>
<feature type="disulfide bond" evidence="5">
    <location>
        <begin position="871"/>
        <end position="904"/>
    </location>
</feature>
<feature type="disulfide bond" evidence="5">
    <location>
        <begin position="876"/>
        <end position="886"/>
    </location>
</feature>
<feature type="disulfide bond" evidence="5">
    <location>
        <begin position="1067"/>
        <end position="1079"/>
    </location>
</feature>
<feature type="disulfide bond" evidence="5">
    <location>
        <begin position="1109"/>
        <end position="1184"/>
    </location>
</feature>
<feature type="disulfide bond" evidence="5">
    <location>
        <begin position="1114"/>
        <end position="1188"/>
    </location>
</feature>
<feature type="disulfide bond" evidence="5">
    <location>
        <begin position="1136"/>
        <end position="1178"/>
    </location>
</feature>
<accession>O90369</accession>